<sequence>MEAGQQWPGKTDFYLQLPKVELHAHLNGSISSSTMKKLIAKKPHLNVHGHMTMIDKGKKRTLQECFQMFQVIHQLTTSAEDILMVTKDVIKEFADDGVKYLELRSTPREENATGMTRKTYVESVLEGIKQCKQENLDIDVRYLMAIDRRGGPTIARETVELAKEFFLSTENTVLGLDLSGDPTIGQANDFLEPLLEAKKAGLKLALHLAEIPNREKENQMLLSLLPDRIGHGTFLSASEAGALDQVDFVRQHQIPLELCLTSNIKSQTVPSYDQHHFGFWYSIAHPSVICTDDKGVFATYLSQEYQLAAETFNLTPFQVWDLSYESINYIFACDNTRSELRKRWTHLKQKVLNCNEVNYF</sequence>
<reference key="1">
    <citation type="journal article" date="2005" name="Science">
        <title>The transcriptional landscape of the mammalian genome.</title>
        <authorList>
            <person name="Carninci P."/>
            <person name="Kasukawa T."/>
            <person name="Katayama S."/>
            <person name="Gough J."/>
            <person name="Frith M.C."/>
            <person name="Maeda N."/>
            <person name="Oyama R."/>
            <person name="Ravasi T."/>
            <person name="Lenhard B."/>
            <person name="Wells C."/>
            <person name="Kodzius R."/>
            <person name="Shimokawa K."/>
            <person name="Bajic V.B."/>
            <person name="Brenner S.E."/>
            <person name="Batalov S."/>
            <person name="Forrest A.R."/>
            <person name="Zavolan M."/>
            <person name="Davis M.J."/>
            <person name="Wilming L.G."/>
            <person name="Aidinis V."/>
            <person name="Allen J.E."/>
            <person name="Ambesi-Impiombato A."/>
            <person name="Apweiler R."/>
            <person name="Aturaliya R.N."/>
            <person name="Bailey T.L."/>
            <person name="Bansal M."/>
            <person name="Baxter L."/>
            <person name="Beisel K.W."/>
            <person name="Bersano T."/>
            <person name="Bono H."/>
            <person name="Chalk A.M."/>
            <person name="Chiu K.P."/>
            <person name="Choudhary V."/>
            <person name="Christoffels A."/>
            <person name="Clutterbuck D.R."/>
            <person name="Crowe M.L."/>
            <person name="Dalla E."/>
            <person name="Dalrymple B.P."/>
            <person name="de Bono B."/>
            <person name="Della Gatta G."/>
            <person name="di Bernardo D."/>
            <person name="Down T."/>
            <person name="Engstrom P."/>
            <person name="Fagiolini M."/>
            <person name="Faulkner G."/>
            <person name="Fletcher C.F."/>
            <person name="Fukushima T."/>
            <person name="Furuno M."/>
            <person name="Futaki S."/>
            <person name="Gariboldi M."/>
            <person name="Georgii-Hemming P."/>
            <person name="Gingeras T.R."/>
            <person name="Gojobori T."/>
            <person name="Green R.E."/>
            <person name="Gustincich S."/>
            <person name="Harbers M."/>
            <person name="Hayashi Y."/>
            <person name="Hensch T.K."/>
            <person name="Hirokawa N."/>
            <person name="Hill D."/>
            <person name="Huminiecki L."/>
            <person name="Iacono M."/>
            <person name="Ikeo K."/>
            <person name="Iwama A."/>
            <person name="Ishikawa T."/>
            <person name="Jakt M."/>
            <person name="Kanapin A."/>
            <person name="Katoh M."/>
            <person name="Kawasawa Y."/>
            <person name="Kelso J."/>
            <person name="Kitamura H."/>
            <person name="Kitano H."/>
            <person name="Kollias G."/>
            <person name="Krishnan S.P."/>
            <person name="Kruger A."/>
            <person name="Kummerfeld S.K."/>
            <person name="Kurochkin I.V."/>
            <person name="Lareau L.F."/>
            <person name="Lazarevic D."/>
            <person name="Lipovich L."/>
            <person name="Liu J."/>
            <person name="Liuni S."/>
            <person name="McWilliam S."/>
            <person name="Madan Babu M."/>
            <person name="Madera M."/>
            <person name="Marchionni L."/>
            <person name="Matsuda H."/>
            <person name="Matsuzawa S."/>
            <person name="Miki H."/>
            <person name="Mignone F."/>
            <person name="Miyake S."/>
            <person name="Morris K."/>
            <person name="Mottagui-Tabar S."/>
            <person name="Mulder N."/>
            <person name="Nakano N."/>
            <person name="Nakauchi H."/>
            <person name="Ng P."/>
            <person name="Nilsson R."/>
            <person name="Nishiguchi S."/>
            <person name="Nishikawa S."/>
            <person name="Nori F."/>
            <person name="Ohara O."/>
            <person name="Okazaki Y."/>
            <person name="Orlando V."/>
            <person name="Pang K.C."/>
            <person name="Pavan W.J."/>
            <person name="Pavesi G."/>
            <person name="Pesole G."/>
            <person name="Petrovsky N."/>
            <person name="Piazza S."/>
            <person name="Reed J."/>
            <person name="Reid J.F."/>
            <person name="Ring B.Z."/>
            <person name="Ringwald M."/>
            <person name="Rost B."/>
            <person name="Ruan Y."/>
            <person name="Salzberg S.L."/>
            <person name="Sandelin A."/>
            <person name="Schneider C."/>
            <person name="Schoenbach C."/>
            <person name="Sekiguchi K."/>
            <person name="Semple C.A."/>
            <person name="Seno S."/>
            <person name="Sessa L."/>
            <person name="Sheng Y."/>
            <person name="Shibata Y."/>
            <person name="Shimada H."/>
            <person name="Shimada K."/>
            <person name="Silva D."/>
            <person name="Sinclair B."/>
            <person name="Sperling S."/>
            <person name="Stupka E."/>
            <person name="Sugiura K."/>
            <person name="Sultana R."/>
            <person name="Takenaka Y."/>
            <person name="Taki K."/>
            <person name="Tammoja K."/>
            <person name="Tan S.L."/>
            <person name="Tang S."/>
            <person name="Taylor M.S."/>
            <person name="Tegner J."/>
            <person name="Teichmann S.A."/>
            <person name="Ueda H.R."/>
            <person name="van Nimwegen E."/>
            <person name="Verardo R."/>
            <person name="Wei C.L."/>
            <person name="Yagi K."/>
            <person name="Yamanishi H."/>
            <person name="Zabarovsky E."/>
            <person name="Zhu S."/>
            <person name="Zimmer A."/>
            <person name="Hide W."/>
            <person name="Bult C."/>
            <person name="Grimmond S.M."/>
            <person name="Teasdale R.D."/>
            <person name="Liu E.T."/>
            <person name="Brusic V."/>
            <person name="Quackenbush J."/>
            <person name="Wahlestedt C."/>
            <person name="Mattick J.S."/>
            <person name="Hume D.A."/>
            <person name="Kai C."/>
            <person name="Sasaki D."/>
            <person name="Tomaru Y."/>
            <person name="Fukuda S."/>
            <person name="Kanamori-Katayama M."/>
            <person name="Suzuki M."/>
            <person name="Aoki J."/>
            <person name="Arakawa T."/>
            <person name="Iida J."/>
            <person name="Imamura K."/>
            <person name="Itoh M."/>
            <person name="Kato T."/>
            <person name="Kawaji H."/>
            <person name="Kawagashira N."/>
            <person name="Kawashima T."/>
            <person name="Kojima M."/>
            <person name="Kondo S."/>
            <person name="Konno H."/>
            <person name="Nakano K."/>
            <person name="Ninomiya N."/>
            <person name="Nishio T."/>
            <person name="Okada M."/>
            <person name="Plessy C."/>
            <person name="Shibata K."/>
            <person name="Shiraki T."/>
            <person name="Suzuki S."/>
            <person name="Tagami M."/>
            <person name="Waki K."/>
            <person name="Watahiki A."/>
            <person name="Okamura-Oho Y."/>
            <person name="Suzuki H."/>
            <person name="Kawai J."/>
            <person name="Hayashizaki Y."/>
        </authorList>
    </citation>
    <scope>NUCLEOTIDE SEQUENCE [LARGE SCALE MRNA] (ISOFORMS 2 AND 3)</scope>
    <source>
        <strain>C57BL/6J</strain>
        <tissue>Brain cortex</tissue>
        <tissue>Cerebellum</tissue>
        <tissue>Spinal cord</tissue>
        <tissue>Testis</tissue>
    </source>
</reference>
<reference key="2">
    <citation type="journal article" date="2009" name="PLoS Biol.">
        <title>Lineage-specific biology revealed by a finished genome assembly of the mouse.</title>
        <authorList>
            <person name="Church D.M."/>
            <person name="Goodstadt L."/>
            <person name="Hillier L.W."/>
            <person name="Zody M.C."/>
            <person name="Goldstein S."/>
            <person name="She X."/>
            <person name="Bult C.J."/>
            <person name="Agarwala R."/>
            <person name="Cherry J.L."/>
            <person name="DiCuccio M."/>
            <person name="Hlavina W."/>
            <person name="Kapustin Y."/>
            <person name="Meric P."/>
            <person name="Maglott D."/>
            <person name="Birtle Z."/>
            <person name="Marques A.C."/>
            <person name="Graves T."/>
            <person name="Zhou S."/>
            <person name="Teague B."/>
            <person name="Potamousis K."/>
            <person name="Churas C."/>
            <person name="Place M."/>
            <person name="Herschleb J."/>
            <person name="Runnheim R."/>
            <person name="Forrest D."/>
            <person name="Amos-Landgraf J."/>
            <person name="Schwartz D.C."/>
            <person name="Cheng Z."/>
            <person name="Lindblad-Toh K."/>
            <person name="Eichler E.E."/>
            <person name="Ponting C.P."/>
        </authorList>
    </citation>
    <scope>NUCLEOTIDE SEQUENCE [LARGE SCALE GENOMIC DNA]</scope>
    <scope>ALTERNATIVE SPLICING (ISOFORM 4)</scope>
    <source>
        <strain>C57BL/6J</strain>
    </source>
</reference>
<reference key="3">
    <citation type="journal article" date="2004" name="Genome Res.">
        <title>The status, quality, and expansion of the NIH full-length cDNA project: the Mammalian Gene Collection (MGC).</title>
        <authorList>
            <consortium name="The MGC Project Team"/>
        </authorList>
    </citation>
    <scope>NUCLEOTIDE SEQUENCE [LARGE SCALE MRNA] (ISOFORM 1)</scope>
    <source>
        <strain>C57BL/6J</strain>
        <tissue>Brain</tissue>
    </source>
</reference>
<dbReference type="EC" id="3.5.4.-" evidence="2"/>
<dbReference type="EMBL" id="AK016299">
    <property type="protein sequence ID" value="BAB30184.1"/>
    <property type="molecule type" value="mRNA"/>
</dbReference>
<dbReference type="EMBL" id="AK044025">
    <property type="protein sequence ID" value="BAC31744.1"/>
    <property type="molecule type" value="mRNA"/>
</dbReference>
<dbReference type="EMBL" id="AK048809">
    <property type="protein sequence ID" value="BAC33464.1"/>
    <property type="molecule type" value="mRNA"/>
</dbReference>
<dbReference type="EMBL" id="AK049697">
    <property type="protein sequence ID" value="BAC33880.1"/>
    <property type="molecule type" value="mRNA"/>
</dbReference>
<dbReference type="EMBL" id="AL845479">
    <property type="protein sequence ID" value="CAM18204.1"/>
    <property type="molecule type" value="Genomic_DNA"/>
</dbReference>
<dbReference type="EMBL" id="AL845479">
    <property type="protein sequence ID" value="CAM18205.1"/>
    <property type="molecule type" value="Genomic_DNA"/>
</dbReference>
<dbReference type="EMBL" id="AL845479">
    <property type="protein sequence ID" value="CAM18206.1"/>
    <property type="status" value="ALT_SEQ"/>
    <property type="molecule type" value="Genomic_DNA"/>
</dbReference>
<dbReference type="EMBL" id="AL845479">
    <property type="protein sequence ID" value="CAM18207.1"/>
    <property type="molecule type" value="Genomic_DNA"/>
</dbReference>
<dbReference type="EMBL" id="BC050879">
    <property type="protein sequence ID" value="AAH50879.1"/>
    <property type="molecule type" value="mRNA"/>
</dbReference>
<dbReference type="EMBL" id="BC052048">
    <property type="protein sequence ID" value="AAH52048.1"/>
    <property type="molecule type" value="mRNA"/>
</dbReference>
<dbReference type="CCDS" id="CCDS16633.1">
    <molecule id="Q80SY6-1"/>
</dbReference>
<dbReference type="CCDS" id="CCDS71121.1">
    <molecule id="Q80SY6-2"/>
</dbReference>
<dbReference type="CCDS" id="CCDS89543.1">
    <molecule id="Q80SY6-4"/>
</dbReference>
<dbReference type="RefSeq" id="NP_001277740.1">
    <molecule id="Q80SY6-2"/>
    <property type="nucleotide sequence ID" value="NM_001290811.1"/>
</dbReference>
<dbReference type="RefSeq" id="NP_001277741.1">
    <property type="nucleotide sequence ID" value="NM_001290812.1"/>
</dbReference>
<dbReference type="RefSeq" id="NP_083751.1">
    <molecule id="Q80SY6-1"/>
    <property type="nucleotide sequence ID" value="NM_029475.2"/>
</dbReference>
<dbReference type="RefSeq" id="XP_006500414.1">
    <molecule id="Q80SY6-1"/>
    <property type="nucleotide sequence ID" value="XM_006500351.2"/>
</dbReference>
<dbReference type="RefSeq" id="XP_006500415.1">
    <molecule id="Q80SY6-1"/>
    <property type="nucleotide sequence ID" value="XM_006500352.2"/>
</dbReference>
<dbReference type="RefSeq" id="XP_006500416.1">
    <molecule id="Q80SY6-1"/>
    <property type="nucleotide sequence ID" value="XM_006500353.3"/>
</dbReference>
<dbReference type="RefSeq" id="XP_006500421.1">
    <property type="nucleotide sequence ID" value="XM_006500358.2"/>
</dbReference>
<dbReference type="RefSeq" id="XP_006500422.1">
    <molecule id="Q80SY6-4"/>
    <property type="nucleotide sequence ID" value="XM_006500359.2"/>
</dbReference>
<dbReference type="RefSeq" id="XP_006500423.1">
    <molecule id="Q80SY6-4"/>
    <property type="nucleotide sequence ID" value="XM_006500360.2"/>
</dbReference>
<dbReference type="SMR" id="Q80SY6"/>
<dbReference type="FunCoup" id="Q80SY6">
    <property type="interactions" value="82"/>
</dbReference>
<dbReference type="STRING" id="10090.ENSMUSP00000113052"/>
<dbReference type="GlyGen" id="Q80SY6">
    <property type="glycosylation" value="1 site, 1 N-linked glycan (1 site)"/>
</dbReference>
<dbReference type="PhosphoSitePlus" id="Q80SY6"/>
<dbReference type="PaxDb" id="10090-ENSMUSP00000113052"/>
<dbReference type="PeptideAtlas" id="Q80SY6"/>
<dbReference type="ProteomicsDB" id="285610">
    <molecule id="Q80SY6-1"/>
</dbReference>
<dbReference type="ProteomicsDB" id="285611">
    <molecule id="Q80SY6-2"/>
</dbReference>
<dbReference type="ProteomicsDB" id="285612">
    <molecule id="Q80SY6-3"/>
</dbReference>
<dbReference type="ProteomicsDB" id="285613">
    <molecule id="Q80SY6-4"/>
</dbReference>
<dbReference type="Pumba" id="Q80SY6"/>
<dbReference type="Antibodypedia" id="23863">
    <property type="antibodies" value="91 antibodies from 16 providers"/>
</dbReference>
<dbReference type="Ensembl" id="ENSMUST00000028702.10">
    <molecule id="Q80SY6-2"/>
    <property type="protein sequence ID" value="ENSMUSP00000028702.4"/>
    <property type="gene ID" value="ENSMUSG00000027259.16"/>
</dbReference>
<dbReference type="Ensembl" id="ENSMUST00000066155.6">
    <molecule id="Q80SY6-1"/>
    <property type="protein sequence ID" value="ENSMUSP00000067133.6"/>
    <property type="gene ID" value="ENSMUSG00000027259.16"/>
</dbReference>
<dbReference type="Ensembl" id="ENSMUST00000110662.9">
    <molecule id="Q80SY6-4"/>
    <property type="protein sequence ID" value="ENSMUSP00000106290.3"/>
    <property type="gene ID" value="ENSMUSG00000027259.16"/>
</dbReference>
<dbReference type="Ensembl" id="ENSMUST00000119031.8">
    <molecule id="Q80SY6-1"/>
    <property type="protein sequence ID" value="ENSMUSP00000113052.2"/>
    <property type="gene ID" value="ENSMUSG00000027259.16"/>
</dbReference>
<dbReference type="GeneID" id="75894"/>
<dbReference type="KEGG" id="mmu:75894"/>
<dbReference type="UCSC" id="uc008lxo.1">
    <molecule id="Q80SY6-3"/>
    <property type="organism name" value="mouse"/>
</dbReference>
<dbReference type="UCSC" id="uc008lxp.2">
    <molecule id="Q80SY6-1"/>
    <property type="organism name" value="mouse"/>
</dbReference>
<dbReference type="AGR" id="MGI:1923144"/>
<dbReference type="CTD" id="75894"/>
<dbReference type="MGI" id="MGI:1923144">
    <property type="gene designation" value="Adal"/>
</dbReference>
<dbReference type="VEuPathDB" id="HostDB:ENSMUSG00000027259"/>
<dbReference type="eggNOG" id="KOG1097">
    <property type="taxonomic scope" value="Eukaryota"/>
</dbReference>
<dbReference type="GeneTree" id="ENSGT00950000183113"/>
<dbReference type="HOGENOM" id="CLU_039228_3_0_1"/>
<dbReference type="InParanoid" id="Q80SY6"/>
<dbReference type="OMA" id="RPQFKPY"/>
<dbReference type="OrthoDB" id="272271at2759"/>
<dbReference type="PhylomeDB" id="Q80SY6"/>
<dbReference type="TreeFam" id="TF314270"/>
<dbReference type="Reactome" id="R-MMU-2161541">
    <property type="pathway name" value="Abacavir metabolism"/>
</dbReference>
<dbReference type="Reactome" id="R-MMU-74217">
    <property type="pathway name" value="Purine salvage"/>
</dbReference>
<dbReference type="BioGRID-ORCS" id="75894">
    <property type="hits" value="3 hits in 76 CRISPR screens"/>
</dbReference>
<dbReference type="ChiTaRS" id="Adal">
    <property type="organism name" value="mouse"/>
</dbReference>
<dbReference type="PRO" id="PR:Q80SY6"/>
<dbReference type="Proteomes" id="UP000000589">
    <property type="component" value="Chromosome 2"/>
</dbReference>
<dbReference type="RNAct" id="Q80SY6">
    <property type="molecule type" value="protein"/>
</dbReference>
<dbReference type="Bgee" id="ENSMUSG00000027259">
    <property type="expression patterns" value="Expressed in otolith organ and 228 other cell types or tissues"/>
</dbReference>
<dbReference type="ExpressionAtlas" id="Q80SY6">
    <property type="expression patterns" value="baseline and differential"/>
</dbReference>
<dbReference type="GO" id="GO:0046872">
    <property type="term" value="F:metal ion binding"/>
    <property type="evidence" value="ECO:0007669"/>
    <property type="project" value="UniProtKB-KW"/>
</dbReference>
<dbReference type="GO" id="GO:0062154">
    <property type="term" value="F:N6-methyl-AMP deaminase activity"/>
    <property type="evidence" value="ECO:0007669"/>
    <property type="project" value="RHEA"/>
</dbReference>
<dbReference type="GO" id="GO:0009117">
    <property type="term" value="P:nucleotide metabolic process"/>
    <property type="evidence" value="ECO:0007669"/>
    <property type="project" value="UniProtKB-KW"/>
</dbReference>
<dbReference type="GO" id="GO:0097305">
    <property type="term" value="P:response to alcohol"/>
    <property type="evidence" value="ECO:0000315"/>
    <property type="project" value="MGI"/>
</dbReference>
<dbReference type="CDD" id="cd00443">
    <property type="entry name" value="ADA_AMPD"/>
    <property type="match status" value="1"/>
</dbReference>
<dbReference type="FunFam" id="3.20.20.140:FF:000033">
    <property type="entry name" value="Adenosine deaminase-like protein"/>
    <property type="match status" value="1"/>
</dbReference>
<dbReference type="Gene3D" id="3.20.20.140">
    <property type="entry name" value="Metal-dependent hydrolases"/>
    <property type="match status" value="1"/>
</dbReference>
<dbReference type="InterPro" id="IPR001365">
    <property type="entry name" value="A_deaminase_dom"/>
</dbReference>
<dbReference type="InterPro" id="IPR006330">
    <property type="entry name" value="Ado/ade_deaminase"/>
</dbReference>
<dbReference type="InterPro" id="IPR032466">
    <property type="entry name" value="Metal_Hydrolase"/>
</dbReference>
<dbReference type="PANTHER" id="PTHR11409">
    <property type="entry name" value="ADENOSINE DEAMINASE"/>
    <property type="match status" value="1"/>
</dbReference>
<dbReference type="PANTHER" id="PTHR11409:SF42">
    <property type="entry name" value="ADENOSINE DEAMINASE-LIKE PROTEIN"/>
    <property type="match status" value="1"/>
</dbReference>
<dbReference type="Pfam" id="PF00962">
    <property type="entry name" value="A_deaminase"/>
    <property type="match status" value="1"/>
</dbReference>
<dbReference type="SUPFAM" id="SSF51556">
    <property type="entry name" value="Metallo-dependent hydrolases"/>
    <property type="match status" value="1"/>
</dbReference>
<protein>
    <recommendedName>
        <fullName evidence="2">N6-Methyl-AMP deaminase</fullName>
        <ecNumber evidence="2">3.5.4.-</ecNumber>
    </recommendedName>
    <alternativeName>
        <fullName>Adenosine deaminase-like protein</fullName>
    </alternativeName>
</protein>
<evidence type="ECO:0000250" key="1">
    <source>
        <dbReference type="UniProtKB" id="P03958"/>
    </source>
</evidence>
<evidence type="ECO:0000250" key="2">
    <source>
        <dbReference type="UniProtKB" id="Q6DHV7"/>
    </source>
</evidence>
<evidence type="ECO:0000250" key="3">
    <source>
        <dbReference type="UniProtKB" id="Q8LPL7"/>
    </source>
</evidence>
<evidence type="ECO:0000303" key="4">
    <source>
    </source>
</evidence>
<evidence type="ECO:0000305" key="5"/>
<evidence type="ECO:0000312" key="6">
    <source>
        <dbReference type="MGI" id="MGI:1923144"/>
    </source>
</evidence>
<comment type="function">
    <text evidence="2">Catalyzes the hydrolysis of the free cytosolic methylated adenosine nucleotide N(6)-methyl-AMP (N6-mAMP) to produce inositol monophosphate (IMP) and methylamine. Is required for the catabolism of cytosolic N6-mAMP, which is derived from the degradation of mRNA containing N6-methylated adenine (m6A).</text>
</comment>
<comment type="catalytic activity">
    <reaction evidence="2">
        <text>N(6)-methyl-AMP + H2O + H(+) = IMP + methylamine</text>
        <dbReference type="Rhea" id="RHEA:16001"/>
        <dbReference type="ChEBI" id="CHEBI:15377"/>
        <dbReference type="ChEBI" id="CHEBI:15378"/>
        <dbReference type="ChEBI" id="CHEBI:58053"/>
        <dbReference type="ChEBI" id="CHEBI:59338"/>
        <dbReference type="ChEBI" id="CHEBI:144842"/>
    </reaction>
    <physiologicalReaction direction="left-to-right" evidence="2">
        <dbReference type="Rhea" id="RHEA:16002"/>
    </physiologicalReaction>
</comment>
<comment type="cofactor">
    <cofactor evidence="2">
        <name>Zn(2+)</name>
        <dbReference type="ChEBI" id="CHEBI:29105"/>
    </cofactor>
    <text evidence="2">Binds 1 zinc ion per subunit.</text>
</comment>
<comment type="subunit">
    <text evidence="2">Monomer.</text>
</comment>
<comment type="alternative products">
    <event type="alternative splicing"/>
    <isoform>
        <id>Q80SY6-1</id>
        <name>1</name>
        <sequence type="displayed"/>
    </isoform>
    <isoform>
        <id>Q80SY6-2</id>
        <name>2</name>
        <sequence type="described" ref="VSP_024822"/>
    </isoform>
    <isoform>
        <id>Q80SY6-3</id>
        <name>3</name>
        <sequence type="described" ref="VSP_024823 VSP_024824"/>
    </isoform>
    <isoform>
        <id>Q80SY6-4</id>
        <name>4</name>
        <sequence type="described" ref="VSP_024825"/>
    </isoform>
</comment>
<comment type="similarity">
    <text evidence="5">Belongs to the metallo-dependent hydrolases superfamily. Adenosine and AMP deaminases family.</text>
</comment>
<comment type="sequence caution" evidence="5">
    <conflict type="erroneous gene model prediction">
        <sequence resource="EMBL-CDS" id="CAM18206"/>
    </conflict>
</comment>
<accession>Q80SY6</accession>
<accession>A2ARU3</accession>
<accession>A2ARU4</accession>
<accession>Q8BLN3</accession>
<accession>Q8BX67</accession>
<accession>Q9D4Q6</accession>
<organism>
    <name type="scientific">Mus musculus</name>
    <name type="common">Mouse</name>
    <dbReference type="NCBI Taxonomy" id="10090"/>
    <lineage>
        <taxon>Eukaryota</taxon>
        <taxon>Metazoa</taxon>
        <taxon>Chordata</taxon>
        <taxon>Craniata</taxon>
        <taxon>Vertebrata</taxon>
        <taxon>Euteleostomi</taxon>
        <taxon>Mammalia</taxon>
        <taxon>Eutheria</taxon>
        <taxon>Euarchontoglires</taxon>
        <taxon>Glires</taxon>
        <taxon>Rodentia</taxon>
        <taxon>Myomorpha</taxon>
        <taxon>Muroidea</taxon>
        <taxon>Muridae</taxon>
        <taxon>Murinae</taxon>
        <taxon>Mus</taxon>
        <taxon>Mus</taxon>
    </lineage>
</organism>
<keyword id="KW-0025">Alternative splicing</keyword>
<keyword id="KW-0378">Hydrolase</keyword>
<keyword id="KW-0479">Metal-binding</keyword>
<keyword id="KW-0546">Nucleotide metabolism</keyword>
<keyword id="KW-1185">Reference proteome</keyword>
<keyword id="KW-0862">Zinc</keyword>
<name>ADAL_MOUSE</name>
<gene>
    <name type="primary">Mapda</name>
    <name evidence="6" type="synonym">Adal</name>
</gene>
<proteinExistence type="evidence at transcript level"/>
<feature type="chain" id="PRO_0000285091" description="N6-Methyl-AMP deaminase">
    <location>
        <begin position="1"/>
        <end position="360"/>
    </location>
</feature>
<feature type="active site" description="Proton donor" evidence="1">
    <location>
        <position position="210"/>
    </location>
</feature>
<feature type="binding site" evidence="3">
    <location>
        <position position="23"/>
    </location>
    <ligand>
        <name>Zn(2+)</name>
        <dbReference type="ChEBI" id="CHEBI:29105"/>
        <note>catalytic</note>
    </ligand>
</feature>
<feature type="binding site" evidence="3">
    <location>
        <position position="25"/>
    </location>
    <ligand>
        <name>N(6)-methyl-AMP</name>
        <dbReference type="ChEBI" id="CHEBI:144842"/>
    </ligand>
</feature>
<feature type="binding site" evidence="3">
    <location>
        <position position="25"/>
    </location>
    <ligand>
        <name>Zn(2+)</name>
        <dbReference type="ChEBI" id="CHEBI:29105"/>
        <note>catalytic</note>
    </ligand>
</feature>
<feature type="binding site" evidence="3">
    <location>
        <position position="27"/>
    </location>
    <ligand>
        <name>N(6)-methyl-AMP</name>
        <dbReference type="ChEBI" id="CHEBI:144842"/>
    </ligand>
</feature>
<feature type="binding site" evidence="3">
    <location>
        <position position="73"/>
    </location>
    <ligand>
        <name>N(6)-methyl-AMP</name>
        <dbReference type="ChEBI" id="CHEBI:144842"/>
    </ligand>
</feature>
<feature type="binding site" evidence="3">
    <location>
        <begin position="105"/>
        <end position="108"/>
    </location>
    <ligand>
        <name>N(6)-methyl-AMP</name>
        <dbReference type="ChEBI" id="CHEBI:144842"/>
    </ligand>
</feature>
<feature type="binding site" evidence="3">
    <location>
        <position position="147"/>
    </location>
    <ligand>
        <name>N(6)-methyl-AMP</name>
        <dbReference type="ChEBI" id="CHEBI:144842"/>
    </ligand>
</feature>
<feature type="binding site" evidence="3">
    <location>
        <position position="180"/>
    </location>
    <ligand>
        <name>N(6)-methyl-AMP</name>
        <dbReference type="ChEBI" id="CHEBI:144842"/>
    </ligand>
</feature>
<feature type="binding site" evidence="3">
    <location>
        <position position="207"/>
    </location>
    <ligand>
        <name>Zn(2+)</name>
        <dbReference type="ChEBI" id="CHEBI:29105"/>
        <note>catalytic</note>
    </ligand>
</feature>
<feature type="binding site" evidence="3">
    <location>
        <position position="210"/>
    </location>
    <ligand>
        <name>N(6)-methyl-AMP</name>
        <dbReference type="ChEBI" id="CHEBI:144842"/>
    </ligand>
</feature>
<feature type="binding site" evidence="3">
    <location>
        <position position="292"/>
    </location>
    <ligand>
        <name>N(6)-methyl-AMP</name>
        <dbReference type="ChEBI" id="CHEBI:144842"/>
    </ligand>
</feature>
<feature type="binding site" evidence="3">
    <location>
        <position position="292"/>
    </location>
    <ligand>
        <name>Zn(2+)</name>
        <dbReference type="ChEBI" id="CHEBI:29105"/>
        <note>catalytic</note>
    </ligand>
</feature>
<feature type="binding site" evidence="3">
    <location>
        <position position="293"/>
    </location>
    <ligand>
        <name>N(6)-methyl-AMP</name>
        <dbReference type="ChEBI" id="CHEBI:144842"/>
    </ligand>
</feature>
<feature type="site" description="Important for catalytic activity" evidence="1">
    <location>
        <position position="231"/>
    </location>
</feature>
<feature type="splice variant" id="VSP_024825" description="In isoform 4." evidence="5">
    <location>
        <begin position="1"/>
        <end position="143"/>
    </location>
</feature>
<feature type="splice variant" id="VSP_024822" description="In isoform 2." evidence="4">
    <location>
        <begin position="1"/>
        <end position="67"/>
    </location>
</feature>
<feature type="splice variant" id="VSP_024823" description="In isoform 3." evidence="4">
    <original>TKDVIKEFADDGVKYLELRSTPREENATG</original>
    <variation>RHRGRLKWRDFPQQCTANLAHVLWLSSTL</variation>
    <location>
        <begin position="86"/>
        <end position="114"/>
    </location>
</feature>
<feature type="splice variant" id="VSP_024824" description="In isoform 3." evidence="4">
    <location>
        <begin position="115"/>
        <end position="360"/>
    </location>
</feature>
<feature type="sequence conflict" description="In Ref. 1; BAC31744." evidence="5" ref="1">
    <original>I</original>
    <variation>T</variation>
    <location sequence="Q80SY6-3">
        <position position="39"/>
    </location>
</feature>
<feature type="sequence conflict" description="In Ref. 1; BAC31744." evidence="5" ref="1">
    <original>N</original>
    <variation>H</variation>
    <location sequence="Q80SY6-3">
        <position position="103"/>
    </location>
</feature>